<comment type="function">
    <text evidence="1">Produces ATP from ADP in the presence of a proton gradient across the membrane. The alpha chain is a regulatory subunit.</text>
</comment>
<comment type="catalytic activity">
    <reaction evidence="1">
        <text>ATP + H2O + 4 H(+)(in) = ADP + phosphate + 5 H(+)(out)</text>
        <dbReference type="Rhea" id="RHEA:57720"/>
        <dbReference type="ChEBI" id="CHEBI:15377"/>
        <dbReference type="ChEBI" id="CHEBI:15378"/>
        <dbReference type="ChEBI" id="CHEBI:30616"/>
        <dbReference type="ChEBI" id="CHEBI:43474"/>
        <dbReference type="ChEBI" id="CHEBI:456216"/>
        <dbReference type="EC" id="7.1.2.2"/>
    </reaction>
</comment>
<comment type="subunit">
    <text evidence="1">F-type ATPases have 2 components, CF(1) - the catalytic core - and CF(0) - the membrane proton channel. CF(1) has five subunits: alpha(3), beta(3), gamma(1), delta(1), epsilon(1). CF(0) has three main subunits: a(1), b(2) and c(9-12). The alpha and beta chains form an alternating ring which encloses part of the gamma chain. CF(1) is attached to CF(0) by a central stalk formed by the gamma and epsilon chains, while a peripheral stalk is formed by the delta and b chains.</text>
</comment>
<comment type="subcellular location">
    <subcellularLocation>
        <location evidence="1">Cell inner membrane</location>
        <topology evidence="1">Peripheral membrane protein</topology>
    </subcellularLocation>
</comment>
<comment type="similarity">
    <text evidence="1">Belongs to the ATPase alpha/beta chains family.</text>
</comment>
<dbReference type="EC" id="7.1.2.2" evidence="1"/>
<dbReference type="EMBL" id="CP000964">
    <property type="protein sequence ID" value="ACI11753.1"/>
    <property type="molecule type" value="Genomic_DNA"/>
</dbReference>
<dbReference type="SMR" id="B5XZM2"/>
<dbReference type="KEGG" id="kpe:KPK_5542"/>
<dbReference type="HOGENOM" id="CLU_010091_2_1_6"/>
<dbReference type="Proteomes" id="UP000001734">
    <property type="component" value="Chromosome"/>
</dbReference>
<dbReference type="GO" id="GO:0005886">
    <property type="term" value="C:plasma membrane"/>
    <property type="evidence" value="ECO:0007669"/>
    <property type="project" value="UniProtKB-SubCell"/>
</dbReference>
<dbReference type="GO" id="GO:0045259">
    <property type="term" value="C:proton-transporting ATP synthase complex"/>
    <property type="evidence" value="ECO:0007669"/>
    <property type="project" value="UniProtKB-KW"/>
</dbReference>
<dbReference type="GO" id="GO:0043531">
    <property type="term" value="F:ADP binding"/>
    <property type="evidence" value="ECO:0007669"/>
    <property type="project" value="TreeGrafter"/>
</dbReference>
<dbReference type="GO" id="GO:0005524">
    <property type="term" value="F:ATP binding"/>
    <property type="evidence" value="ECO:0007669"/>
    <property type="project" value="UniProtKB-UniRule"/>
</dbReference>
<dbReference type="GO" id="GO:0046933">
    <property type="term" value="F:proton-transporting ATP synthase activity, rotational mechanism"/>
    <property type="evidence" value="ECO:0007669"/>
    <property type="project" value="UniProtKB-UniRule"/>
</dbReference>
<dbReference type="CDD" id="cd18113">
    <property type="entry name" value="ATP-synt_F1_alpha_C"/>
    <property type="match status" value="1"/>
</dbReference>
<dbReference type="CDD" id="cd18116">
    <property type="entry name" value="ATP-synt_F1_alpha_N"/>
    <property type="match status" value="1"/>
</dbReference>
<dbReference type="CDD" id="cd01132">
    <property type="entry name" value="F1-ATPase_alpha_CD"/>
    <property type="match status" value="1"/>
</dbReference>
<dbReference type="FunFam" id="1.20.150.20:FF:000001">
    <property type="entry name" value="ATP synthase subunit alpha"/>
    <property type="match status" value="1"/>
</dbReference>
<dbReference type="FunFam" id="2.40.30.20:FF:000001">
    <property type="entry name" value="ATP synthase subunit alpha"/>
    <property type="match status" value="1"/>
</dbReference>
<dbReference type="FunFam" id="3.40.50.300:FF:000002">
    <property type="entry name" value="ATP synthase subunit alpha"/>
    <property type="match status" value="1"/>
</dbReference>
<dbReference type="Gene3D" id="2.40.30.20">
    <property type="match status" value="1"/>
</dbReference>
<dbReference type="Gene3D" id="1.20.150.20">
    <property type="entry name" value="ATP synthase alpha/beta chain, C-terminal domain"/>
    <property type="match status" value="1"/>
</dbReference>
<dbReference type="Gene3D" id="3.40.50.300">
    <property type="entry name" value="P-loop containing nucleotide triphosphate hydrolases"/>
    <property type="match status" value="1"/>
</dbReference>
<dbReference type="HAMAP" id="MF_01346">
    <property type="entry name" value="ATP_synth_alpha_bact"/>
    <property type="match status" value="1"/>
</dbReference>
<dbReference type="InterPro" id="IPR023366">
    <property type="entry name" value="ATP_synth_asu-like_sf"/>
</dbReference>
<dbReference type="InterPro" id="IPR000793">
    <property type="entry name" value="ATP_synth_asu_C"/>
</dbReference>
<dbReference type="InterPro" id="IPR038376">
    <property type="entry name" value="ATP_synth_asu_C_sf"/>
</dbReference>
<dbReference type="InterPro" id="IPR033732">
    <property type="entry name" value="ATP_synth_F1_a_nt-bd_dom"/>
</dbReference>
<dbReference type="InterPro" id="IPR005294">
    <property type="entry name" value="ATP_synth_F1_asu"/>
</dbReference>
<dbReference type="InterPro" id="IPR020003">
    <property type="entry name" value="ATPase_a/bsu_AS"/>
</dbReference>
<dbReference type="InterPro" id="IPR004100">
    <property type="entry name" value="ATPase_F1/V1/A1_a/bsu_N"/>
</dbReference>
<dbReference type="InterPro" id="IPR036121">
    <property type="entry name" value="ATPase_F1/V1/A1_a/bsu_N_sf"/>
</dbReference>
<dbReference type="InterPro" id="IPR000194">
    <property type="entry name" value="ATPase_F1/V1/A1_a/bsu_nucl-bd"/>
</dbReference>
<dbReference type="InterPro" id="IPR027417">
    <property type="entry name" value="P-loop_NTPase"/>
</dbReference>
<dbReference type="NCBIfam" id="TIGR00962">
    <property type="entry name" value="atpA"/>
    <property type="match status" value="1"/>
</dbReference>
<dbReference type="NCBIfam" id="NF009884">
    <property type="entry name" value="PRK13343.1"/>
    <property type="match status" value="1"/>
</dbReference>
<dbReference type="PANTHER" id="PTHR48082">
    <property type="entry name" value="ATP SYNTHASE SUBUNIT ALPHA, MITOCHONDRIAL"/>
    <property type="match status" value="1"/>
</dbReference>
<dbReference type="PANTHER" id="PTHR48082:SF2">
    <property type="entry name" value="ATP SYNTHASE SUBUNIT ALPHA, MITOCHONDRIAL"/>
    <property type="match status" value="1"/>
</dbReference>
<dbReference type="Pfam" id="PF00006">
    <property type="entry name" value="ATP-synt_ab"/>
    <property type="match status" value="1"/>
</dbReference>
<dbReference type="Pfam" id="PF00306">
    <property type="entry name" value="ATP-synt_ab_C"/>
    <property type="match status" value="1"/>
</dbReference>
<dbReference type="Pfam" id="PF02874">
    <property type="entry name" value="ATP-synt_ab_N"/>
    <property type="match status" value="1"/>
</dbReference>
<dbReference type="SUPFAM" id="SSF47917">
    <property type="entry name" value="C-terminal domain of alpha and beta subunits of F1 ATP synthase"/>
    <property type="match status" value="1"/>
</dbReference>
<dbReference type="SUPFAM" id="SSF50615">
    <property type="entry name" value="N-terminal domain of alpha and beta subunits of F1 ATP synthase"/>
    <property type="match status" value="1"/>
</dbReference>
<dbReference type="SUPFAM" id="SSF52540">
    <property type="entry name" value="P-loop containing nucleoside triphosphate hydrolases"/>
    <property type="match status" value="1"/>
</dbReference>
<dbReference type="PROSITE" id="PS00152">
    <property type="entry name" value="ATPASE_ALPHA_BETA"/>
    <property type="match status" value="1"/>
</dbReference>
<keyword id="KW-0066">ATP synthesis</keyword>
<keyword id="KW-0067">ATP-binding</keyword>
<keyword id="KW-0997">Cell inner membrane</keyword>
<keyword id="KW-1003">Cell membrane</keyword>
<keyword id="KW-0139">CF(1)</keyword>
<keyword id="KW-0375">Hydrogen ion transport</keyword>
<keyword id="KW-0406">Ion transport</keyword>
<keyword id="KW-0472">Membrane</keyword>
<keyword id="KW-0547">Nucleotide-binding</keyword>
<keyword id="KW-1278">Translocase</keyword>
<keyword id="KW-0813">Transport</keyword>
<sequence length="513" mass="55183">MQLNSTEISELIKQRIAQFNVVSEAHNEGTIVSVSDGVIRIHGLAECMQGEMISLPGNRYAIALNLERDSVGAVVMGPYADLAEGMKVKCTGRILEVPVGRGLLGRVVNTLGAPIDGKGPLENDGFSAVEAIAPGVIERQSVDQPVQTGYKSVDAMIPIGRGQRELIIGDRQTGKTALAIDAIINQRDSGIKCVYVAIGQKASTISNVVRKLEEHGALANTIVVVATASESAALQYLAPYAGCAMGEYFRDRGEDALIIYDDLSKQAVAYRQISLLLRRPPGREAFPGDVFYLHSRLLERAARVNAEYVEAFTKGEVKGKTGSLTALPIIETQAGDVSAFVPTNVISITDGQIFLETNLFNAGIRPAVNPGISVSRVGGAAQTKIMKKLSGGIRTALAQYRELAAFSQFASDLDDATRKQLDHGQKVTELLKQKQYAPMSVAQQSLVLFAAERGYLADVELAKIGSFEAALLAYVDRDHAPLMQEINQSGGYNDEIEGKLKGILDSFKATQSW</sequence>
<accession>B5XZM2</accession>
<protein>
    <recommendedName>
        <fullName evidence="1">ATP synthase subunit alpha</fullName>
        <ecNumber evidence="1">7.1.2.2</ecNumber>
    </recommendedName>
    <alternativeName>
        <fullName evidence="1">ATP synthase F1 sector subunit alpha</fullName>
    </alternativeName>
    <alternativeName>
        <fullName evidence="1">F-ATPase subunit alpha</fullName>
    </alternativeName>
</protein>
<proteinExistence type="inferred from homology"/>
<reference key="1">
    <citation type="journal article" date="2008" name="PLoS Genet.">
        <title>Complete genome sequence of the N2-fixing broad host range endophyte Klebsiella pneumoniae 342 and virulence predictions verified in mice.</title>
        <authorList>
            <person name="Fouts D.E."/>
            <person name="Tyler H.L."/>
            <person name="DeBoy R.T."/>
            <person name="Daugherty S."/>
            <person name="Ren Q."/>
            <person name="Badger J.H."/>
            <person name="Durkin A.S."/>
            <person name="Huot H."/>
            <person name="Shrivastava S."/>
            <person name="Kothari S."/>
            <person name="Dodson R.J."/>
            <person name="Mohamoud Y."/>
            <person name="Khouri H."/>
            <person name="Roesch L.F.W."/>
            <person name="Krogfelt K.A."/>
            <person name="Struve C."/>
            <person name="Triplett E.W."/>
            <person name="Methe B.A."/>
        </authorList>
    </citation>
    <scope>NUCLEOTIDE SEQUENCE [LARGE SCALE GENOMIC DNA]</scope>
    <source>
        <strain>342</strain>
    </source>
</reference>
<gene>
    <name evidence="1" type="primary">atpA</name>
    <name type="ordered locus">KPK_5542</name>
</gene>
<name>ATPA_KLEP3</name>
<organism>
    <name type="scientific">Klebsiella pneumoniae (strain 342)</name>
    <dbReference type="NCBI Taxonomy" id="507522"/>
    <lineage>
        <taxon>Bacteria</taxon>
        <taxon>Pseudomonadati</taxon>
        <taxon>Pseudomonadota</taxon>
        <taxon>Gammaproteobacteria</taxon>
        <taxon>Enterobacterales</taxon>
        <taxon>Enterobacteriaceae</taxon>
        <taxon>Klebsiella/Raoultella group</taxon>
        <taxon>Klebsiella</taxon>
        <taxon>Klebsiella pneumoniae complex</taxon>
    </lineage>
</organism>
<feature type="chain" id="PRO_1000143395" description="ATP synthase subunit alpha">
    <location>
        <begin position="1"/>
        <end position="513"/>
    </location>
</feature>
<feature type="binding site" evidence="1">
    <location>
        <begin position="169"/>
        <end position="176"/>
    </location>
    <ligand>
        <name>ATP</name>
        <dbReference type="ChEBI" id="CHEBI:30616"/>
    </ligand>
</feature>
<feature type="site" description="Required for activity" evidence="1">
    <location>
        <position position="373"/>
    </location>
</feature>
<evidence type="ECO:0000255" key="1">
    <source>
        <dbReference type="HAMAP-Rule" id="MF_01346"/>
    </source>
</evidence>